<name>SYC_MYCLE</name>
<feature type="chain" id="PRO_0000159437" description="Cysteine--tRNA ligase">
    <location>
        <begin position="1"/>
        <end position="473"/>
    </location>
</feature>
<feature type="short sequence motif" description="'HIGH' region">
    <location>
        <begin position="35"/>
        <end position="45"/>
    </location>
</feature>
<feature type="short sequence motif" description="'KMSKS' region">
    <location>
        <begin position="267"/>
        <end position="271"/>
    </location>
</feature>
<feature type="binding site" evidence="1">
    <location>
        <position position="33"/>
    </location>
    <ligand>
        <name>Zn(2+)</name>
        <dbReference type="ChEBI" id="CHEBI:29105"/>
    </ligand>
</feature>
<feature type="binding site" evidence="1">
    <location>
        <position position="211"/>
    </location>
    <ligand>
        <name>Zn(2+)</name>
        <dbReference type="ChEBI" id="CHEBI:29105"/>
    </ligand>
</feature>
<feature type="binding site" evidence="1">
    <location>
        <position position="236"/>
    </location>
    <ligand>
        <name>Zn(2+)</name>
        <dbReference type="ChEBI" id="CHEBI:29105"/>
    </ligand>
</feature>
<feature type="binding site" evidence="1">
    <location>
        <position position="240"/>
    </location>
    <ligand>
        <name>Zn(2+)</name>
        <dbReference type="ChEBI" id="CHEBI:29105"/>
    </ligand>
</feature>
<feature type="binding site" evidence="1">
    <location>
        <position position="270"/>
    </location>
    <ligand>
        <name>ATP</name>
        <dbReference type="ChEBI" id="CHEBI:30616"/>
    </ligand>
</feature>
<keyword id="KW-0030">Aminoacyl-tRNA synthetase</keyword>
<keyword id="KW-0067">ATP-binding</keyword>
<keyword id="KW-0963">Cytoplasm</keyword>
<keyword id="KW-0436">Ligase</keyword>
<keyword id="KW-0479">Metal-binding</keyword>
<keyword id="KW-0547">Nucleotide-binding</keyword>
<keyword id="KW-0648">Protein biosynthesis</keyword>
<keyword id="KW-1185">Reference proteome</keyword>
<keyword id="KW-0862">Zinc</keyword>
<accession>P57990</accession>
<dbReference type="EC" id="6.1.1.16"/>
<dbReference type="EMBL" id="AL583918">
    <property type="protein sequence ID" value="CAC29831.1"/>
    <property type="molecule type" value="Genomic_DNA"/>
</dbReference>
<dbReference type="PIR" id="C86949">
    <property type="entry name" value="C86949"/>
</dbReference>
<dbReference type="RefSeq" id="NP_301350.1">
    <property type="nucleotide sequence ID" value="NC_002677.1"/>
</dbReference>
<dbReference type="RefSeq" id="WP_010907674.1">
    <property type="nucleotide sequence ID" value="NC_002677.1"/>
</dbReference>
<dbReference type="SMR" id="P57990"/>
<dbReference type="STRING" id="272631.gene:17574142"/>
<dbReference type="KEGG" id="mle:ML0323"/>
<dbReference type="PATRIC" id="fig|272631.5.peg.521"/>
<dbReference type="Leproma" id="ML0323"/>
<dbReference type="eggNOG" id="COG0215">
    <property type="taxonomic scope" value="Bacteria"/>
</dbReference>
<dbReference type="HOGENOM" id="CLU_013528_0_1_11"/>
<dbReference type="OrthoDB" id="9815130at2"/>
<dbReference type="BRENDA" id="6.1.1.16">
    <property type="organism ID" value="3504"/>
</dbReference>
<dbReference type="Proteomes" id="UP000000806">
    <property type="component" value="Chromosome"/>
</dbReference>
<dbReference type="GO" id="GO:0005829">
    <property type="term" value="C:cytosol"/>
    <property type="evidence" value="ECO:0007669"/>
    <property type="project" value="TreeGrafter"/>
</dbReference>
<dbReference type="GO" id="GO:0005524">
    <property type="term" value="F:ATP binding"/>
    <property type="evidence" value="ECO:0007669"/>
    <property type="project" value="UniProtKB-UniRule"/>
</dbReference>
<dbReference type="GO" id="GO:0004817">
    <property type="term" value="F:cysteine-tRNA ligase activity"/>
    <property type="evidence" value="ECO:0007669"/>
    <property type="project" value="UniProtKB-UniRule"/>
</dbReference>
<dbReference type="GO" id="GO:0008270">
    <property type="term" value="F:zinc ion binding"/>
    <property type="evidence" value="ECO:0007669"/>
    <property type="project" value="UniProtKB-UniRule"/>
</dbReference>
<dbReference type="GO" id="GO:0006423">
    <property type="term" value="P:cysteinyl-tRNA aminoacylation"/>
    <property type="evidence" value="ECO:0007669"/>
    <property type="project" value="UniProtKB-UniRule"/>
</dbReference>
<dbReference type="CDD" id="cd00672">
    <property type="entry name" value="CysRS_core"/>
    <property type="match status" value="1"/>
</dbReference>
<dbReference type="FunFam" id="3.40.50.620:FF:000068">
    <property type="entry name" value="Cysteine--tRNA ligase"/>
    <property type="match status" value="1"/>
</dbReference>
<dbReference type="Gene3D" id="1.20.120.1910">
    <property type="entry name" value="Cysteine-tRNA ligase, C-terminal anti-codon recognition domain"/>
    <property type="match status" value="1"/>
</dbReference>
<dbReference type="Gene3D" id="3.40.50.620">
    <property type="entry name" value="HUPs"/>
    <property type="match status" value="1"/>
</dbReference>
<dbReference type="HAMAP" id="MF_00041">
    <property type="entry name" value="Cys_tRNA_synth"/>
    <property type="match status" value="1"/>
</dbReference>
<dbReference type="InterPro" id="IPR015803">
    <property type="entry name" value="Cys-tRNA-ligase"/>
</dbReference>
<dbReference type="InterPro" id="IPR015273">
    <property type="entry name" value="Cys-tRNA-synt_Ia_DALR"/>
</dbReference>
<dbReference type="InterPro" id="IPR024909">
    <property type="entry name" value="Cys-tRNA/MSH_ligase"/>
</dbReference>
<dbReference type="InterPro" id="IPR014729">
    <property type="entry name" value="Rossmann-like_a/b/a_fold"/>
</dbReference>
<dbReference type="InterPro" id="IPR032678">
    <property type="entry name" value="tRNA-synt_1_cat_dom"/>
</dbReference>
<dbReference type="InterPro" id="IPR009080">
    <property type="entry name" value="tRNAsynth_Ia_anticodon-bd"/>
</dbReference>
<dbReference type="NCBIfam" id="TIGR00435">
    <property type="entry name" value="cysS"/>
    <property type="match status" value="1"/>
</dbReference>
<dbReference type="PANTHER" id="PTHR10890:SF30">
    <property type="entry name" value="CYSTEINE--TRNA LIGASE"/>
    <property type="match status" value="1"/>
</dbReference>
<dbReference type="PANTHER" id="PTHR10890">
    <property type="entry name" value="CYSTEINYL-TRNA SYNTHETASE"/>
    <property type="match status" value="1"/>
</dbReference>
<dbReference type="Pfam" id="PF09190">
    <property type="entry name" value="DALR_2"/>
    <property type="match status" value="1"/>
</dbReference>
<dbReference type="Pfam" id="PF01406">
    <property type="entry name" value="tRNA-synt_1e"/>
    <property type="match status" value="1"/>
</dbReference>
<dbReference type="PRINTS" id="PR00983">
    <property type="entry name" value="TRNASYNTHCYS"/>
</dbReference>
<dbReference type="SMART" id="SM00840">
    <property type="entry name" value="DALR_2"/>
    <property type="match status" value="1"/>
</dbReference>
<dbReference type="SUPFAM" id="SSF47323">
    <property type="entry name" value="Anticodon-binding domain of a subclass of class I aminoacyl-tRNA synthetases"/>
    <property type="match status" value="1"/>
</dbReference>
<dbReference type="SUPFAM" id="SSF52374">
    <property type="entry name" value="Nucleotidylyl transferase"/>
    <property type="match status" value="1"/>
</dbReference>
<reference key="1">
    <citation type="journal article" date="2001" name="Nature">
        <title>Massive gene decay in the leprosy bacillus.</title>
        <authorList>
            <person name="Cole S.T."/>
            <person name="Eiglmeier K."/>
            <person name="Parkhill J."/>
            <person name="James K.D."/>
            <person name="Thomson N.R."/>
            <person name="Wheeler P.R."/>
            <person name="Honore N."/>
            <person name="Garnier T."/>
            <person name="Churcher C.M."/>
            <person name="Harris D.E."/>
            <person name="Mungall K.L."/>
            <person name="Basham D."/>
            <person name="Brown D."/>
            <person name="Chillingworth T."/>
            <person name="Connor R."/>
            <person name="Davies R.M."/>
            <person name="Devlin K."/>
            <person name="Duthoy S."/>
            <person name="Feltwell T."/>
            <person name="Fraser A."/>
            <person name="Hamlin N."/>
            <person name="Holroyd S."/>
            <person name="Hornsby T."/>
            <person name="Jagels K."/>
            <person name="Lacroix C."/>
            <person name="Maclean J."/>
            <person name="Moule S."/>
            <person name="Murphy L.D."/>
            <person name="Oliver K."/>
            <person name="Quail M.A."/>
            <person name="Rajandream M.A."/>
            <person name="Rutherford K.M."/>
            <person name="Rutter S."/>
            <person name="Seeger K."/>
            <person name="Simon S."/>
            <person name="Simmonds M."/>
            <person name="Skelton J."/>
            <person name="Squares R."/>
            <person name="Squares S."/>
            <person name="Stevens K."/>
            <person name="Taylor K."/>
            <person name="Whitehead S."/>
            <person name="Woodward J.R."/>
            <person name="Barrell B.G."/>
        </authorList>
    </citation>
    <scope>NUCLEOTIDE SEQUENCE [LARGE SCALE GENOMIC DNA]</scope>
    <source>
        <strain>TN</strain>
    </source>
</reference>
<organism>
    <name type="scientific">Mycobacterium leprae (strain TN)</name>
    <dbReference type="NCBI Taxonomy" id="272631"/>
    <lineage>
        <taxon>Bacteria</taxon>
        <taxon>Bacillati</taxon>
        <taxon>Actinomycetota</taxon>
        <taxon>Actinomycetes</taxon>
        <taxon>Mycobacteriales</taxon>
        <taxon>Mycobacteriaceae</taxon>
        <taxon>Mycobacterium</taxon>
    </lineage>
</organism>
<gene>
    <name type="primary">cysS</name>
    <name type="synonym">cysS1</name>
    <name type="ordered locus">ML0323</name>
</gene>
<comment type="catalytic activity">
    <reaction>
        <text>tRNA(Cys) + L-cysteine + ATP = L-cysteinyl-tRNA(Cys) + AMP + diphosphate</text>
        <dbReference type="Rhea" id="RHEA:17773"/>
        <dbReference type="Rhea" id="RHEA-COMP:9661"/>
        <dbReference type="Rhea" id="RHEA-COMP:9679"/>
        <dbReference type="ChEBI" id="CHEBI:30616"/>
        <dbReference type="ChEBI" id="CHEBI:33019"/>
        <dbReference type="ChEBI" id="CHEBI:35235"/>
        <dbReference type="ChEBI" id="CHEBI:78442"/>
        <dbReference type="ChEBI" id="CHEBI:78517"/>
        <dbReference type="ChEBI" id="CHEBI:456215"/>
        <dbReference type="EC" id="6.1.1.16"/>
    </reaction>
</comment>
<comment type="cofactor">
    <cofactor evidence="1">
        <name>Zn(2+)</name>
        <dbReference type="ChEBI" id="CHEBI:29105"/>
    </cofactor>
    <text evidence="1">Binds 1 zinc ion per subunit.</text>
</comment>
<comment type="subunit">
    <text evidence="1">Monomer.</text>
</comment>
<comment type="subcellular location">
    <subcellularLocation>
        <location evidence="1">Cytoplasm</location>
    </subcellularLocation>
</comment>
<comment type="similarity">
    <text evidence="2">Belongs to the class-I aminoacyl-tRNA synthetase family.</text>
</comment>
<proteinExistence type="inferred from homology"/>
<sequence>MIDSGHLRLHDTVAGAVRDFVPLRAGHVSIYLCGATVQGQPHIGHVRSGVAFDILRRWLMARGYDVAFIRNVTDIDDKILNKAAAAGRPWWEWAATHERAFTAAYDALDVLPPSAEPRATGHITQMIELIELLIETGHAYTGGSDVYFDVLSYPDYGQLSGHKMDYIHQGEGVTTGKRDQRDFTLWKGAKSGEPSWPTPWGRGRPGWHLECSAMARAYLGSEFDIHCGGMDLVFPHHENEIAQSRAVGDGFARYWLHNGWVTMGGEKMSKSLGNVLSIPAVLQRVRPAELRYYLGSAHYRSMLEFSEAALQDAVKAYVGVENFLTRVRTRVGAVGTGELTPRFAAALDDDLAVPIALAEVHHARVEGNRALDIGDHEGALTNAGAIRAMMGILGCDPLDERWESRDETSAALAAVDVLVAAELESRQMAREQRNWVLADQIRDRLKDAGIEVTDTVNGPQWELLAGDKQVDAR</sequence>
<protein>
    <recommendedName>
        <fullName>Cysteine--tRNA ligase</fullName>
        <ecNumber>6.1.1.16</ecNumber>
    </recommendedName>
    <alternativeName>
        <fullName>Cysteinyl-tRNA synthetase</fullName>
        <shortName>CysRS</shortName>
    </alternativeName>
</protein>
<evidence type="ECO:0000250" key="1"/>
<evidence type="ECO:0000305" key="2"/>